<sequence length="603" mass="68148">MPRFITELKRTHSCGELTKADIGKEVVLFGWVNNRRDHGGAVFIDLRDRAGLTQVVFEEDVRPDVHELAGQLRLEYCVGVRGKVVSRGGNVNPKLRTGEIEVHASDLEIFNRSEPAPFQIEDEIDTGEEKRLQYRYLDLRRAPLQRTLMTRAKVNHLTRNYFTDKGFLELETPFMVKYTPGGARNFLVPSRLNPGKFYALAESPQLFKQLYMMAGFDRYFQIVRCFRDEDLRLDRQPEFTQIDVEMSFVEQNDVFDVMEGLVVKLWKEVLGIEIPRPFQRMPFEESMAKYGNDKPDLRFDMPHVVLTDLVRQHDGGGVPLMHEAVKAKGIVKAMRVPASANFSRTEIDKLEEYVKGMGAKGLARAKVGEGGEWTQSPLAKTITPALRQAINEACEAKPGDLLLFQFGKESVVHTVMANLRVHLAKRMGLIPEYGSGGAWRFLWVVNPPLFEYDEESGQWAAAHHAFTRPHDSDLQFLESDPGKVNCYRYDLVLNGFEIGGGSIRLHDPEVQARVFKAMGITDEEARSKFGFLLDALKMGAPPHGGIALGMDRLVMLLTGAESLRDVVAWPKTQKGTDLMTGAPGDVDARQLRELYVKSTYEPK</sequence>
<proteinExistence type="inferred from homology"/>
<name>SYDND_ANAD2</name>
<comment type="function">
    <text evidence="1">Aspartyl-tRNA synthetase with relaxed tRNA specificity since it is able to aspartylate not only its cognate tRNA(Asp) but also tRNA(Asn). Reaction proceeds in two steps: L-aspartate is first activated by ATP to form Asp-AMP and then transferred to the acceptor end of tRNA(Asp/Asn).</text>
</comment>
<comment type="catalytic activity">
    <reaction evidence="1">
        <text>tRNA(Asx) + L-aspartate + ATP = L-aspartyl-tRNA(Asx) + AMP + diphosphate</text>
        <dbReference type="Rhea" id="RHEA:18349"/>
        <dbReference type="Rhea" id="RHEA-COMP:9710"/>
        <dbReference type="Rhea" id="RHEA-COMP:9711"/>
        <dbReference type="ChEBI" id="CHEBI:29991"/>
        <dbReference type="ChEBI" id="CHEBI:30616"/>
        <dbReference type="ChEBI" id="CHEBI:33019"/>
        <dbReference type="ChEBI" id="CHEBI:78442"/>
        <dbReference type="ChEBI" id="CHEBI:78516"/>
        <dbReference type="ChEBI" id="CHEBI:456215"/>
        <dbReference type="EC" id="6.1.1.23"/>
    </reaction>
</comment>
<comment type="subunit">
    <text evidence="1">Homodimer.</text>
</comment>
<comment type="subcellular location">
    <subcellularLocation>
        <location evidence="1">Cytoplasm</location>
    </subcellularLocation>
</comment>
<comment type="similarity">
    <text evidence="1">Belongs to the class-II aminoacyl-tRNA synthetase family. Type 1 subfamily.</text>
</comment>
<protein>
    <recommendedName>
        <fullName evidence="1">Aspartate--tRNA(Asp/Asn) ligase</fullName>
        <ecNumber evidence="1">6.1.1.23</ecNumber>
    </recommendedName>
    <alternativeName>
        <fullName evidence="1">Aspartyl-tRNA synthetase</fullName>
        <shortName evidence="1">AspRS</shortName>
    </alternativeName>
    <alternativeName>
        <fullName evidence="1">Non-discriminating aspartyl-tRNA synthetase</fullName>
        <shortName evidence="1">ND-AspRS</shortName>
    </alternativeName>
</protein>
<reference key="1">
    <citation type="submission" date="2009-01" db="EMBL/GenBank/DDBJ databases">
        <title>Complete sequence of Anaeromyxobacter dehalogenans 2CP-1.</title>
        <authorList>
            <person name="Lucas S."/>
            <person name="Copeland A."/>
            <person name="Lapidus A."/>
            <person name="Glavina del Rio T."/>
            <person name="Dalin E."/>
            <person name="Tice H."/>
            <person name="Bruce D."/>
            <person name="Goodwin L."/>
            <person name="Pitluck S."/>
            <person name="Saunders E."/>
            <person name="Brettin T."/>
            <person name="Detter J.C."/>
            <person name="Han C."/>
            <person name="Larimer F."/>
            <person name="Land M."/>
            <person name="Hauser L."/>
            <person name="Kyrpides N."/>
            <person name="Ovchinnikova G."/>
            <person name="Beliaev A.S."/>
            <person name="Richardson P."/>
        </authorList>
    </citation>
    <scope>NUCLEOTIDE SEQUENCE [LARGE SCALE GENOMIC DNA]</scope>
    <source>
        <strain>2CP-1 / ATCC BAA-258</strain>
    </source>
</reference>
<feature type="chain" id="PRO_1000198950" description="Aspartate--tRNA(Asp/Asn) ligase">
    <location>
        <begin position="1"/>
        <end position="603"/>
    </location>
</feature>
<feature type="region of interest" description="Aspartate" evidence="1">
    <location>
        <begin position="205"/>
        <end position="208"/>
    </location>
</feature>
<feature type="binding site" evidence="1">
    <location>
        <begin position="227"/>
        <end position="229"/>
    </location>
    <ligand>
        <name>ATP</name>
        <dbReference type="ChEBI" id="CHEBI:30616"/>
    </ligand>
</feature>
<feature type="binding site" evidence="1">
    <location>
        <position position="227"/>
    </location>
    <ligand>
        <name>L-aspartate</name>
        <dbReference type="ChEBI" id="CHEBI:29991"/>
    </ligand>
</feature>
<feature type="binding site" evidence="1">
    <location>
        <position position="236"/>
    </location>
    <ligand>
        <name>ATP</name>
        <dbReference type="ChEBI" id="CHEBI:30616"/>
    </ligand>
</feature>
<feature type="binding site" evidence="1">
    <location>
        <position position="463"/>
    </location>
    <ligand>
        <name>L-aspartate</name>
        <dbReference type="ChEBI" id="CHEBI:29991"/>
    </ligand>
</feature>
<feature type="binding site" evidence="1">
    <location>
        <position position="497"/>
    </location>
    <ligand>
        <name>ATP</name>
        <dbReference type="ChEBI" id="CHEBI:30616"/>
    </ligand>
</feature>
<feature type="binding site" evidence="1">
    <location>
        <position position="504"/>
    </location>
    <ligand>
        <name>L-aspartate</name>
        <dbReference type="ChEBI" id="CHEBI:29991"/>
    </ligand>
</feature>
<feature type="binding site" evidence="1">
    <location>
        <begin position="549"/>
        <end position="552"/>
    </location>
    <ligand>
        <name>ATP</name>
        <dbReference type="ChEBI" id="CHEBI:30616"/>
    </ligand>
</feature>
<feature type="site" description="Important for tRNA non-discrimination" evidence="1">
    <location>
        <position position="38"/>
    </location>
</feature>
<feature type="site" description="Important for tRNA non-discrimination" evidence="1">
    <location>
        <position position="89"/>
    </location>
</feature>
<keyword id="KW-0030">Aminoacyl-tRNA synthetase</keyword>
<keyword id="KW-0067">ATP-binding</keyword>
<keyword id="KW-0963">Cytoplasm</keyword>
<keyword id="KW-0436">Ligase</keyword>
<keyword id="KW-0547">Nucleotide-binding</keyword>
<keyword id="KW-0648">Protein biosynthesis</keyword>
<dbReference type="EC" id="6.1.1.23" evidence="1"/>
<dbReference type="EMBL" id="CP001359">
    <property type="protein sequence ID" value="ACL64762.1"/>
    <property type="molecule type" value="Genomic_DNA"/>
</dbReference>
<dbReference type="RefSeq" id="WP_012632718.1">
    <property type="nucleotide sequence ID" value="NC_011891.1"/>
</dbReference>
<dbReference type="SMR" id="B8JH60"/>
<dbReference type="KEGG" id="acp:A2cp1_1418"/>
<dbReference type="HOGENOM" id="CLU_014330_3_2_7"/>
<dbReference type="Proteomes" id="UP000007089">
    <property type="component" value="Chromosome"/>
</dbReference>
<dbReference type="GO" id="GO:0005737">
    <property type="term" value="C:cytoplasm"/>
    <property type="evidence" value="ECO:0007669"/>
    <property type="project" value="UniProtKB-SubCell"/>
</dbReference>
<dbReference type="GO" id="GO:0004815">
    <property type="term" value="F:aspartate-tRNA ligase activity"/>
    <property type="evidence" value="ECO:0007669"/>
    <property type="project" value="UniProtKB-UniRule"/>
</dbReference>
<dbReference type="GO" id="GO:0050560">
    <property type="term" value="F:aspartate-tRNA(Asn) ligase activity"/>
    <property type="evidence" value="ECO:0007669"/>
    <property type="project" value="UniProtKB-EC"/>
</dbReference>
<dbReference type="GO" id="GO:0005524">
    <property type="term" value="F:ATP binding"/>
    <property type="evidence" value="ECO:0007669"/>
    <property type="project" value="UniProtKB-UniRule"/>
</dbReference>
<dbReference type="GO" id="GO:0003676">
    <property type="term" value="F:nucleic acid binding"/>
    <property type="evidence" value="ECO:0007669"/>
    <property type="project" value="InterPro"/>
</dbReference>
<dbReference type="GO" id="GO:0006422">
    <property type="term" value="P:aspartyl-tRNA aminoacylation"/>
    <property type="evidence" value="ECO:0007669"/>
    <property type="project" value="UniProtKB-UniRule"/>
</dbReference>
<dbReference type="CDD" id="cd00777">
    <property type="entry name" value="AspRS_core"/>
    <property type="match status" value="1"/>
</dbReference>
<dbReference type="CDD" id="cd04317">
    <property type="entry name" value="EcAspRS_like_N"/>
    <property type="match status" value="1"/>
</dbReference>
<dbReference type="Gene3D" id="3.30.930.10">
    <property type="entry name" value="Bira Bifunctional Protein, Domain 2"/>
    <property type="match status" value="1"/>
</dbReference>
<dbReference type="Gene3D" id="3.30.1360.30">
    <property type="entry name" value="GAD-like domain"/>
    <property type="match status" value="1"/>
</dbReference>
<dbReference type="Gene3D" id="2.40.50.140">
    <property type="entry name" value="Nucleic acid-binding proteins"/>
    <property type="match status" value="1"/>
</dbReference>
<dbReference type="HAMAP" id="MF_00044">
    <property type="entry name" value="Asp_tRNA_synth_type1"/>
    <property type="match status" value="1"/>
</dbReference>
<dbReference type="InterPro" id="IPR004364">
    <property type="entry name" value="Aa-tRNA-synt_II"/>
</dbReference>
<dbReference type="InterPro" id="IPR006195">
    <property type="entry name" value="aa-tRNA-synth_II"/>
</dbReference>
<dbReference type="InterPro" id="IPR045864">
    <property type="entry name" value="aa-tRNA-synth_II/BPL/LPL"/>
</dbReference>
<dbReference type="InterPro" id="IPR004524">
    <property type="entry name" value="Asp-tRNA-ligase_1"/>
</dbReference>
<dbReference type="InterPro" id="IPR047089">
    <property type="entry name" value="Asp-tRNA-ligase_1_N"/>
</dbReference>
<dbReference type="InterPro" id="IPR002312">
    <property type="entry name" value="Asp/Asn-tRNA-synth_IIb"/>
</dbReference>
<dbReference type="InterPro" id="IPR047090">
    <property type="entry name" value="AspRS_core"/>
</dbReference>
<dbReference type="InterPro" id="IPR004115">
    <property type="entry name" value="GAD-like_sf"/>
</dbReference>
<dbReference type="InterPro" id="IPR029351">
    <property type="entry name" value="GAD_dom"/>
</dbReference>
<dbReference type="InterPro" id="IPR012340">
    <property type="entry name" value="NA-bd_OB-fold"/>
</dbReference>
<dbReference type="InterPro" id="IPR004365">
    <property type="entry name" value="NA-bd_OB_tRNA"/>
</dbReference>
<dbReference type="NCBIfam" id="TIGR00459">
    <property type="entry name" value="aspS_bact"/>
    <property type="match status" value="1"/>
</dbReference>
<dbReference type="NCBIfam" id="NF001750">
    <property type="entry name" value="PRK00476.1"/>
    <property type="match status" value="1"/>
</dbReference>
<dbReference type="PANTHER" id="PTHR22594:SF5">
    <property type="entry name" value="ASPARTATE--TRNA LIGASE, MITOCHONDRIAL"/>
    <property type="match status" value="1"/>
</dbReference>
<dbReference type="PANTHER" id="PTHR22594">
    <property type="entry name" value="ASPARTYL/LYSYL-TRNA SYNTHETASE"/>
    <property type="match status" value="1"/>
</dbReference>
<dbReference type="Pfam" id="PF02938">
    <property type="entry name" value="GAD"/>
    <property type="match status" value="1"/>
</dbReference>
<dbReference type="Pfam" id="PF00152">
    <property type="entry name" value="tRNA-synt_2"/>
    <property type="match status" value="1"/>
</dbReference>
<dbReference type="Pfam" id="PF01336">
    <property type="entry name" value="tRNA_anti-codon"/>
    <property type="match status" value="1"/>
</dbReference>
<dbReference type="PRINTS" id="PR01042">
    <property type="entry name" value="TRNASYNTHASP"/>
</dbReference>
<dbReference type="SUPFAM" id="SSF55681">
    <property type="entry name" value="Class II aaRS and biotin synthetases"/>
    <property type="match status" value="1"/>
</dbReference>
<dbReference type="SUPFAM" id="SSF55261">
    <property type="entry name" value="GAD domain-like"/>
    <property type="match status" value="1"/>
</dbReference>
<dbReference type="SUPFAM" id="SSF50249">
    <property type="entry name" value="Nucleic acid-binding proteins"/>
    <property type="match status" value="1"/>
</dbReference>
<dbReference type="PROSITE" id="PS50862">
    <property type="entry name" value="AA_TRNA_LIGASE_II"/>
    <property type="match status" value="1"/>
</dbReference>
<accession>B8JH60</accession>
<organism>
    <name type="scientific">Anaeromyxobacter dehalogenans (strain 2CP-1 / ATCC BAA-258)</name>
    <dbReference type="NCBI Taxonomy" id="455488"/>
    <lineage>
        <taxon>Bacteria</taxon>
        <taxon>Pseudomonadati</taxon>
        <taxon>Myxococcota</taxon>
        <taxon>Myxococcia</taxon>
        <taxon>Myxococcales</taxon>
        <taxon>Cystobacterineae</taxon>
        <taxon>Anaeromyxobacteraceae</taxon>
        <taxon>Anaeromyxobacter</taxon>
    </lineage>
</organism>
<gene>
    <name evidence="1" type="primary">aspS</name>
    <name type="ordered locus">A2cp1_1418</name>
</gene>
<evidence type="ECO:0000255" key="1">
    <source>
        <dbReference type="HAMAP-Rule" id="MF_00044"/>
    </source>
</evidence>